<gene>
    <name evidence="1" type="primary">murG</name>
    <name type="ordered locus">PHZ_c2323</name>
</gene>
<comment type="function">
    <text evidence="1">Cell wall formation. Catalyzes the transfer of a GlcNAc subunit on undecaprenyl-pyrophosphoryl-MurNAc-pentapeptide (lipid intermediate I) to form undecaprenyl-pyrophosphoryl-MurNAc-(pentapeptide)GlcNAc (lipid intermediate II).</text>
</comment>
<comment type="catalytic activity">
    <reaction evidence="1">
        <text>di-trans,octa-cis-undecaprenyl diphospho-N-acetyl-alpha-D-muramoyl-L-alanyl-D-glutamyl-meso-2,6-diaminopimeloyl-D-alanyl-D-alanine + UDP-N-acetyl-alpha-D-glucosamine = di-trans,octa-cis-undecaprenyl diphospho-[N-acetyl-alpha-D-glucosaminyl-(1-&gt;4)]-N-acetyl-alpha-D-muramoyl-L-alanyl-D-glutamyl-meso-2,6-diaminopimeloyl-D-alanyl-D-alanine + UDP + H(+)</text>
        <dbReference type="Rhea" id="RHEA:31227"/>
        <dbReference type="ChEBI" id="CHEBI:15378"/>
        <dbReference type="ChEBI" id="CHEBI:57705"/>
        <dbReference type="ChEBI" id="CHEBI:58223"/>
        <dbReference type="ChEBI" id="CHEBI:61387"/>
        <dbReference type="ChEBI" id="CHEBI:61388"/>
        <dbReference type="EC" id="2.4.1.227"/>
    </reaction>
</comment>
<comment type="pathway">
    <text evidence="1">Cell wall biogenesis; peptidoglycan biosynthesis.</text>
</comment>
<comment type="subcellular location">
    <subcellularLocation>
        <location evidence="1">Cell inner membrane</location>
        <topology evidence="1">Peripheral membrane protein</topology>
        <orientation evidence="1">Cytoplasmic side</orientation>
    </subcellularLocation>
</comment>
<comment type="similarity">
    <text evidence="1">Belongs to the glycosyltransferase 28 family. MurG subfamily.</text>
</comment>
<dbReference type="EC" id="2.4.1.227" evidence="1"/>
<dbReference type="EMBL" id="CP000747">
    <property type="protein sequence ID" value="ACG78733.1"/>
    <property type="molecule type" value="Genomic_DNA"/>
</dbReference>
<dbReference type="RefSeq" id="WP_012522874.1">
    <property type="nucleotide sequence ID" value="NC_011144.1"/>
</dbReference>
<dbReference type="SMR" id="B4RFS0"/>
<dbReference type="STRING" id="450851.PHZ_c2323"/>
<dbReference type="CAZy" id="GT28">
    <property type="family name" value="Glycosyltransferase Family 28"/>
</dbReference>
<dbReference type="KEGG" id="pzu:PHZ_c2323"/>
<dbReference type="eggNOG" id="COG0707">
    <property type="taxonomic scope" value="Bacteria"/>
</dbReference>
<dbReference type="HOGENOM" id="CLU_037404_2_1_5"/>
<dbReference type="OrthoDB" id="9808936at2"/>
<dbReference type="UniPathway" id="UPA00219"/>
<dbReference type="Proteomes" id="UP000001868">
    <property type="component" value="Chromosome"/>
</dbReference>
<dbReference type="GO" id="GO:0005886">
    <property type="term" value="C:plasma membrane"/>
    <property type="evidence" value="ECO:0007669"/>
    <property type="project" value="UniProtKB-SubCell"/>
</dbReference>
<dbReference type="GO" id="GO:0051991">
    <property type="term" value="F:UDP-N-acetyl-D-glucosamine:N-acetylmuramoyl-L-alanyl-D-glutamyl-meso-2,6-diaminopimelyl-D-alanyl-D-alanine-diphosphoundecaprenol 4-beta-N-acetylglucosaminlytransferase activity"/>
    <property type="evidence" value="ECO:0007669"/>
    <property type="project" value="RHEA"/>
</dbReference>
<dbReference type="GO" id="GO:0050511">
    <property type="term" value="F:undecaprenyldiphospho-muramoylpentapeptide beta-N-acetylglucosaminyltransferase activity"/>
    <property type="evidence" value="ECO:0007669"/>
    <property type="project" value="UniProtKB-UniRule"/>
</dbReference>
<dbReference type="GO" id="GO:0005975">
    <property type="term" value="P:carbohydrate metabolic process"/>
    <property type="evidence" value="ECO:0007669"/>
    <property type="project" value="InterPro"/>
</dbReference>
<dbReference type="GO" id="GO:0051301">
    <property type="term" value="P:cell division"/>
    <property type="evidence" value="ECO:0007669"/>
    <property type="project" value="UniProtKB-KW"/>
</dbReference>
<dbReference type="GO" id="GO:0071555">
    <property type="term" value="P:cell wall organization"/>
    <property type="evidence" value="ECO:0007669"/>
    <property type="project" value="UniProtKB-KW"/>
</dbReference>
<dbReference type="GO" id="GO:0030259">
    <property type="term" value="P:lipid glycosylation"/>
    <property type="evidence" value="ECO:0007669"/>
    <property type="project" value="UniProtKB-UniRule"/>
</dbReference>
<dbReference type="GO" id="GO:0009252">
    <property type="term" value="P:peptidoglycan biosynthetic process"/>
    <property type="evidence" value="ECO:0007669"/>
    <property type="project" value="UniProtKB-UniRule"/>
</dbReference>
<dbReference type="GO" id="GO:0008360">
    <property type="term" value="P:regulation of cell shape"/>
    <property type="evidence" value="ECO:0007669"/>
    <property type="project" value="UniProtKB-KW"/>
</dbReference>
<dbReference type="CDD" id="cd03785">
    <property type="entry name" value="GT28_MurG"/>
    <property type="match status" value="1"/>
</dbReference>
<dbReference type="Gene3D" id="3.40.50.2000">
    <property type="entry name" value="Glycogen Phosphorylase B"/>
    <property type="match status" value="2"/>
</dbReference>
<dbReference type="HAMAP" id="MF_00033">
    <property type="entry name" value="MurG"/>
    <property type="match status" value="1"/>
</dbReference>
<dbReference type="InterPro" id="IPR006009">
    <property type="entry name" value="GlcNAc_MurG"/>
</dbReference>
<dbReference type="InterPro" id="IPR007235">
    <property type="entry name" value="Glyco_trans_28_C"/>
</dbReference>
<dbReference type="InterPro" id="IPR004276">
    <property type="entry name" value="GlycoTrans_28_N"/>
</dbReference>
<dbReference type="NCBIfam" id="TIGR01133">
    <property type="entry name" value="murG"/>
    <property type="match status" value="1"/>
</dbReference>
<dbReference type="PANTHER" id="PTHR21015:SF22">
    <property type="entry name" value="GLYCOSYLTRANSFERASE"/>
    <property type="match status" value="1"/>
</dbReference>
<dbReference type="PANTHER" id="PTHR21015">
    <property type="entry name" value="UDP-N-ACETYLGLUCOSAMINE--N-ACETYLMURAMYL-(PENTAPEPTIDE) PYROPHOSPHORYL-UNDECAPRENOL N-ACETYLGLUCOSAMINE TRANSFERASE 1"/>
    <property type="match status" value="1"/>
</dbReference>
<dbReference type="Pfam" id="PF04101">
    <property type="entry name" value="Glyco_tran_28_C"/>
    <property type="match status" value="1"/>
</dbReference>
<dbReference type="Pfam" id="PF03033">
    <property type="entry name" value="Glyco_transf_28"/>
    <property type="match status" value="1"/>
</dbReference>
<dbReference type="SUPFAM" id="SSF53756">
    <property type="entry name" value="UDP-Glycosyltransferase/glycogen phosphorylase"/>
    <property type="match status" value="1"/>
</dbReference>
<feature type="chain" id="PRO_1000192139" description="UDP-N-acetylglucosamine--N-acetylmuramyl-(pentapeptide) pyrophosphoryl-undecaprenol N-acetylglucosamine transferase">
    <location>
        <begin position="1"/>
        <end position="365"/>
    </location>
</feature>
<feature type="binding site" evidence="1">
    <location>
        <begin position="12"/>
        <end position="14"/>
    </location>
    <ligand>
        <name>UDP-N-acetyl-alpha-D-glucosamine</name>
        <dbReference type="ChEBI" id="CHEBI:57705"/>
    </ligand>
</feature>
<feature type="binding site" evidence="1">
    <location>
        <position position="123"/>
    </location>
    <ligand>
        <name>UDP-N-acetyl-alpha-D-glucosamine</name>
        <dbReference type="ChEBI" id="CHEBI:57705"/>
    </ligand>
</feature>
<feature type="binding site" evidence="1">
    <location>
        <position position="166"/>
    </location>
    <ligand>
        <name>UDP-N-acetyl-alpha-D-glucosamine</name>
        <dbReference type="ChEBI" id="CHEBI:57705"/>
    </ligand>
</feature>
<feature type="binding site" evidence="1">
    <location>
        <position position="194"/>
    </location>
    <ligand>
        <name>UDP-N-acetyl-alpha-D-glucosamine</name>
        <dbReference type="ChEBI" id="CHEBI:57705"/>
    </ligand>
</feature>
<feature type="binding site" evidence="1">
    <location>
        <position position="295"/>
    </location>
    <ligand>
        <name>UDP-N-acetyl-alpha-D-glucosamine</name>
        <dbReference type="ChEBI" id="CHEBI:57705"/>
    </ligand>
</feature>
<name>MURG_PHEZH</name>
<accession>B4RFS0</accession>
<protein>
    <recommendedName>
        <fullName evidence="1">UDP-N-acetylglucosamine--N-acetylmuramyl-(pentapeptide) pyrophosphoryl-undecaprenol N-acetylglucosamine transferase</fullName>
        <ecNumber evidence="1">2.4.1.227</ecNumber>
    </recommendedName>
    <alternativeName>
        <fullName evidence="1">Undecaprenyl-PP-MurNAc-pentapeptide-UDPGlcNAc GlcNAc transferase</fullName>
    </alternativeName>
</protein>
<proteinExistence type="inferred from homology"/>
<evidence type="ECO:0000255" key="1">
    <source>
        <dbReference type="HAMAP-Rule" id="MF_00033"/>
    </source>
</evidence>
<sequence length="365" mass="38674">MRKTAVVAAGGTGGHLFPAQALAEALIARGWRIVLASDERVAGLAQDFPAERRIGLSAATYRPGDPVGMMRAGFAVLRGAMHARAAFREIGPDVVVGFGGYPSAPALVAAILDRRPTVIHEQNAVMGRTNRILAPHVRTVACAFPTLKKAPPKVAGRAVVVGNPVRPPIRALADVPYVPPEPNGPVRLLVTGGSQGARLLSELVPEAVKALPEDLRRRLTVHQQTRPESMNTARRAYRDALVDAEIAPFFRDIAGRLREAHLVVGRAGAGTVCEFAIAGKPSILVPLAIALDDDQGQNARLLADAGGAEVARENQLTVDTMANALEKLLTNPARLQRMAEAARSVAIPDAAERLADVVEQTARGR</sequence>
<organism>
    <name type="scientific">Phenylobacterium zucineum (strain HLK1)</name>
    <dbReference type="NCBI Taxonomy" id="450851"/>
    <lineage>
        <taxon>Bacteria</taxon>
        <taxon>Pseudomonadati</taxon>
        <taxon>Pseudomonadota</taxon>
        <taxon>Alphaproteobacteria</taxon>
        <taxon>Caulobacterales</taxon>
        <taxon>Caulobacteraceae</taxon>
        <taxon>Phenylobacterium</taxon>
    </lineage>
</organism>
<keyword id="KW-0131">Cell cycle</keyword>
<keyword id="KW-0132">Cell division</keyword>
<keyword id="KW-0997">Cell inner membrane</keyword>
<keyword id="KW-1003">Cell membrane</keyword>
<keyword id="KW-0133">Cell shape</keyword>
<keyword id="KW-0961">Cell wall biogenesis/degradation</keyword>
<keyword id="KW-0328">Glycosyltransferase</keyword>
<keyword id="KW-0472">Membrane</keyword>
<keyword id="KW-0573">Peptidoglycan synthesis</keyword>
<keyword id="KW-1185">Reference proteome</keyword>
<keyword id="KW-0808">Transferase</keyword>
<reference key="1">
    <citation type="journal article" date="2008" name="BMC Genomics">
        <title>Complete genome of Phenylobacterium zucineum - a novel facultative intracellular bacterium isolated from human erythroleukemia cell line K562.</title>
        <authorList>
            <person name="Luo Y."/>
            <person name="Xu X."/>
            <person name="Ding Z."/>
            <person name="Liu Z."/>
            <person name="Zhang B."/>
            <person name="Yan Z."/>
            <person name="Sun J."/>
            <person name="Hu S."/>
            <person name="Hu X."/>
        </authorList>
    </citation>
    <scope>NUCLEOTIDE SEQUENCE [LARGE SCALE GENOMIC DNA]</scope>
    <source>
        <strain>HLK1</strain>
    </source>
</reference>